<gene>
    <name type="primary">LDB2</name>
    <name type="synonym">CLIM1</name>
</gene>
<feature type="chain" id="PRO_0000084387" description="LIM domain-binding protein 2">
    <location>
        <begin position="1"/>
        <end position="373"/>
    </location>
</feature>
<feature type="domain" description="LIM interaction domain (LID)" evidence="2">
    <location>
        <begin position="298"/>
        <end position="337"/>
    </location>
</feature>
<feature type="region of interest" description="Disordered" evidence="3">
    <location>
        <begin position="244"/>
        <end position="291"/>
    </location>
</feature>
<feature type="region of interest" description="Disordered" evidence="3">
    <location>
        <begin position="327"/>
        <end position="373"/>
    </location>
</feature>
<feature type="compositionally biased region" description="Low complexity" evidence="3">
    <location>
        <begin position="263"/>
        <end position="280"/>
    </location>
</feature>
<feature type="compositionally biased region" description="Polar residues" evidence="3">
    <location>
        <begin position="341"/>
        <end position="361"/>
    </location>
</feature>
<feature type="splice variant" id="VSP_027825" description="In isoform 3." evidence="5">
    <location>
        <begin position="1"/>
        <end position="24"/>
    </location>
</feature>
<feature type="splice variant" id="VSP_027828" description="In isoform 3." evidence="5">
    <location>
        <begin position="296"/>
        <end position="297"/>
    </location>
</feature>
<feature type="splice variant" id="VSP_027826" description="In isoform 2." evidence="6">
    <original>DVMVVGEPTLMGGEFGDEDERLITRLENTQYDAA</original>
    <variation>GLGAIPNCSLNPGRDGDLCHSTAVTPSGQFKEKH</variation>
    <location>
        <begin position="298"/>
        <end position="331"/>
    </location>
</feature>
<feature type="splice variant" id="VSP_027827" description="In isoform 2." evidence="6">
    <location>
        <begin position="332"/>
        <end position="373"/>
    </location>
</feature>
<proteinExistence type="evidence at protein level"/>
<reference key="1">
    <citation type="journal article" date="1998" name="Mamm. Genome">
        <title>Cloning and chromosomal localization of two novel human genes encoding LIM-domain binding factors CLIM1 and CLIM2/LDB1/NLI.</title>
        <authorList>
            <person name="Semina E.V."/>
            <person name="Altherr M.R."/>
            <person name="Murray J.C."/>
        </authorList>
    </citation>
    <scope>NUCLEOTIDE SEQUENCE [MRNA] (ISOFORM 1)</scope>
</reference>
<reference key="2">
    <citation type="submission" date="1998-03" db="EMBL/GenBank/DDBJ databases">
        <title>Cloning and identification of LDB1 cDNA.</title>
        <authorList>
            <person name="Zhou Y."/>
            <person name="Du G.W."/>
            <person name="Wang J.H."/>
            <person name="Yuan J.G."/>
            <person name="Qiang B.Q."/>
        </authorList>
    </citation>
    <scope>NUCLEOTIDE SEQUENCE [MRNA] (ISOFORM 3)</scope>
</reference>
<reference key="3">
    <citation type="submission" date="1998-05" db="EMBL/GenBank/DDBJ databases">
        <title>Cloning, characterization, and physical mapping of the human homologs of the mouse C-LIM gene.</title>
        <authorList>
            <person name="Phillips J.C."/>
            <person name="Goldman D.A."/>
            <person name="Wiggs J.L."/>
        </authorList>
    </citation>
    <scope>NUCLEOTIDE SEQUENCE [MRNA] (ISOFORMS 1 AND 2)</scope>
    <source>
        <tissue>Brain</tissue>
    </source>
</reference>
<reference key="4">
    <citation type="journal article" date="1998" name="Nat. Biotechnol.">
        <title>Selection system for genes encoding nuclear-targeted proteins.</title>
        <authorList>
            <person name="Ueki N."/>
            <person name="Oda T."/>
            <person name="Kondo M."/>
            <person name="Yano K."/>
            <person name="Noguchi T."/>
            <person name="Muramatsu M.-A."/>
        </authorList>
    </citation>
    <scope>NUCLEOTIDE SEQUENCE [LARGE SCALE MRNA] (ISOFORM 1)</scope>
    <scope>SUBCELLULAR LOCATION</scope>
    <source>
        <tissue>Fetal brain</tissue>
    </source>
</reference>
<reference key="5">
    <citation type="journal article" date="2004" name="Genome Res.">
        <title>The status, quality, and expansion of the NIH full-length cDNA project: the Mammalian Gene Collection (MGC).</title>
        <authorList>
            <consortium name="The MGC Project Team"/>
        </authorList>
    </citation>
    <scope>NUCLEOTIDE SEQUENCE [LARGE SCALE MRNA] (ISOFORM 1)</scope>
    <source>
        <tissue>Lung</tissue>
    </source>
</reference>
<reference key="6">
    <citation type="journal article" date="2006" name="J. Biochem.">
        <title>Spliced isoforms of LIM-domain-binding protein (CLIM/NLI/Ldb) lacking the LIM-interaction domain.</title>
        <authorList>
            <person name="Tran Y.H."/>
            <person name="Xu Z."/>
            <person name="Kato A."/>
            <person name="Mistry A.C."/>
            <person name="Goya Y."/>
            <person name="Taira M."/>
            <person name="Brandt S.J."/>
            <person name="Hirose S."/>
        </authorList>
    </citation>
    <scope>ALTERNATIVE SPLICING</scope>
</reference>
<reference key="7">
    <citation type="journal article" date="2011" name="Sci. Signal.">
        <title>System-wide temporal characterization of the proteome and phosphoproteome of human embryonic stem cell differentiation.</title>
        <authorList>
            <person name="Rigbolt K.T."/>
            <person name="Prokhorova T.A."/>
            <person name="Akimov V."/>
            <person name="Henningsen J."/>
            <person name="Johansen P.T."/>
            <person name="Kratchmarova I."/>
            <person name="Kassem M."/>
            <person name="Mann M."/>
            <person name="Olsen J.V."/>
            <person name="Blagoev B."/>
        </authorList>
    </citation>
    <scope>IDENTIFICATION BY MASS SPECTROMETRY [LARGE SCALE ANALYSIS]</scope>
</reference>
<evidence type="ECO:0000250" key="1">
    <source>
        <dbReference type="UniProtKB" id="O55203"/>
    </source>
</evidence>
<evidence type="ECO:0000255" key="2">
    <source>
        <dbReference type="PROSITE-ProRule" id="PRU01302"/>
    </source>
</evidence>
<evidence type="ECO:0000256" key="3">
    <source>
        <dbReference type="SAM" id="MobiDB-lite"/>
    </source>
</evidence>
<evidence type="ECO:0000269" key="4">
    <source>
    </source>
</evidence>
<evidence type="ECO:0000303" key="5">
    <source ref="2"/>
</evidence>
<evidence type="ECO:0000303" key="6">
    <source ref="3"/>
</evidence>
<evidence type="ECO:0000305" key="7"/>
<dbReference type="EMBL" id="AF068651">
    <property type="protein sequence ID" value="AAC77817.1"/>
    <property type="molecule type" value="mRNA"/>
</dbReference>
<dbReference type="EMBL" id="AF052389">
    <property type="protein sequence ID" value="AAC13274.1"/>
    <property type="molecule type" value="mRNA"/>
</dbReference>
<dbReference type="EMBL" id="AF064492">
    <property type="protein sequence ID" value="AAC28342.1"/>
    <property type="molecule type" value="mRNA"/>
</dbReference>
<dbReference type="EMBL" id="AF064493">
    <property type="protein sequence ID" value="AAC28343.1"/>
    <property type="molecule type" value="mRNA"/>
</dbReference>
<dbReference type="EMBL" id="AF047337">
    <property type="protein sequence ID" value="AAC83552.1"/>
    <property type="molecule type" value="mRNA"/>
</dbReference>
<dbReference type="EMBL" id="BC034019">
    <property type="protein sequence ID" value="AAH34019.1"/>
    <property type="molecule type" value="mRNA"/>
</dbReference>
<dbReference type="CCDS" id="CCDS3420.1">
    <molecule id="O43679-1"/>
</dbReference>
<dbReference type="CCDS" id="CCDS47031.1">
    <molecule id="O43679-2"/>
</dbReference>
<dbReference type="RefSeq" id="NP_001124306.1">
    <molecule id="O43679-2"/>
    <property type="nucleotide sequence ID" value="NM_001130834.3"/>
</dbReference>
<dbReference type="RefSeq" id="NP_001281.1">
    <molecule id="O43679-1"/>
    <property type="nucleotide sequence ID" value="NM_001290.5"/>
</dbReference>
<dbReference type="RefSeq" id="XP_024310046.1">
    <molecule id="O43679-2"/>
    <property type="nucleotide sequence ID" value="XM_024454278.2"/>
</dbReference>
<dbReference type="RefSeq" id="XP_054207183.1">
    <molecule id="O43679-2"/>
    <property type="nucleotide sequence ID" value="XM_054351208.1"/>
</dbReference>
<dbReference type="SMR" id="O43679"/>
<dbReference type="BioGRID" id="114535">
    <property type="interactions" value="31"/>
</dbReference>
<dbReference type="DIP" id="DIP-24262N"/>
<dbReference type="DIP" id="DIP-41215N"/>
<dbReference type="FunCoup" id="O43679">
    <property type="interactions" value="267"/>
</dbReference>
<dbReference type="IntAct" id="O43679">
    <property type="interactions" value="31"/>
</dbReference>
<dbReference type="MINT" id="O43679"/>
<dbReference type="STRING" id="9606.ENSP00000306772"/>
<dbReference type="GlyGen" id="O43679">
    <property type="glycosylation" value="1 site, 1 O-linked glycan (1 site)"/>
</dbReference>
<dbReference type="iPTMnet" id="O43679"/>
<dbReference type="MetOSite" id="O43679"/>
<dbReference type="PhosphoSitePlus" id="O43679"/>
<dbReference type="BioMuta" id="LDB2"/>
<dbReference type="jPOST" id="O43679"/>
<dbReference type="MassIVE" id="O43679"/>
<dbReference type="PaxDb" id="9606-ENSP00000306772"/>
<dbReference type="PeptideAtlas" id="O43679"/>
<dbReference type="ProteomicsDB" id="49107">
    <molecule id="O43679-1"/>
</dbReference>
<dbReference type="ProteomicsDB" id="49108">
    <molecule id="O43679-2"/>
</dbReference>
<dbReference type="ProteomicsDB" id="49109">
    <molecule id="O43679-3"/>
</dbReference>
<dbReference type="Antibodypedia" id="4310">
    <property type="antibodies" value="237 antibodies from 28 providers"/>
</dbReference>
<dbReference type="DNASU" id="9079"/>
<dbReference type="Ensembl" id="ENST00000304523.10">
    <molecule id="O43679-1"/>
    <property type="protein sequence ID" value="ENSP00000306772.5"/>
    <property type="gene ID" value="ENSG00000169744.13"/>
</dbReference>
<dbReference type="Ensembl" id="ENST00000441778.6">
    <molecule id="O43679-2"/>
    <property type="protein sequence ID" value="ENSP00000392089.2"/>
    <property type="gene ID" value="ENSG00000169744.13"/>
</dbReference>
<dbReference type="GeneID" id="9079"/>
<dbReference type="KEGG" id="hsa:9079"/>
<dbReference type="MANE-Select" id="ENST00000304523.10">
    <property type="protein sequence ID" value="ENSP00000306772.5"/>
    <property type="RefSeq nucleotide sequence ID" value="NM_001290.5"/>
    <property type="RefSeq protein sequence ID" value="NP_001281.1"/>
</dbReference>
<dbReference type="UCSC" id="uc003goz.5">
    <molecule id="O43679-1"/>
    <property type="organism name" value="human"/>
</dbReference>
<dbReference type="AGR" id="HGNC:6533"/>
<dbReference type="CTD" id="9079"/>
<dbReference type="DisGeNET" id="9079"/>
<dbReference type="GeneCards" id="LDB2"/>
<dbReference type="HGNC" id="HGNC:6533">
    <property type="gene designation" value="LDB2"/>
</dbReference>
<dbReference type="HPA" id="ENSG00000169744">
    <property type="expression patterns" value="Low tissue specificity"/>
</dbReference>
<dbReference type="MIM" id="603450">
    <property type="type" value="gene"/>
</dbReference>
<dbReference type="neXtProt" id="NX_O43679"/>
<dbReference type="OpenTargets" id="ENSG00000169744"/>
<dbReference type="PharmGKB" id="PA30317"/>
<dbReference type="VEuPathDB" id="HostDB:ENSG00000169744"/>
<dbReference type="eggNOG" id="KOG2181">
    <property type="taxonomic scope" value="Eukaryota"/>
</dbReference>
<dbReference type="GeneTree" id="ENSGT00390000005639"/>
<dbReference type="InParanoid" id="O43679"/>
<dbReference type="OMA" id="TPWNSKP"/>
<dbReference type="OrthoDB" id="9478067at2759"/>
<dbReference type="PAN-GO" id="O43679">
    <property type="GO annotations" value="6 GO annotations based on evolutionary models"/>
</dbReference>
<dbReference type="PhylomeDB" id="O43679"/>
<dbReference type="TreeFam" id="TF319923"/>
<dbReference type="PathwayCommons" id="O43679"/>
<dbReference type="SignaLink" id="O43679"/>
<dbReference type="SIGNOR" id="O43679"/>
<dbReference type="BioGRID-ORCS" id="9079">
    <property type="hits" value="8 hits in 1151 CRISPR screens"/>
</dbReference>
<dbReference type="ChiTaRS" id="LDB2">
    <property type="organism name" value="human"/>
</dbReference>
<dbReference type="GeneWiki" id="LDB2"/>
<dbReference type="GenomeRNAi" id="9079"/>
<dbReference type="Pharos" id="O43679">
    <property type="development level" value="Tbio"/>
</dbReference>
<dbReference type="PRO" id="PR:O43679"/>
<dbReference type="Proteomes" id="UP000005640">
    <property type="component" value="Chromosome 4"/>
</dbReference>
<dbReference type="RNAct" id="O43679">
    <property type="molecule type" value="protein"/>
</dbReference>
<dbReference type="Bgee" id="ENSG00000169744">
    <property type="expression patterns" value="Expressed in right lung and 192 other cell types or tissues"/>
</dbReference>
<dbReference type="ExpressionAtlas" id="O43679">
    <property type="expression patterns" value="baseline and differential"/>
</dbReference>
<dbReference type="GO" id="GO:0031252">
    <property type="term" value="C:cell leading edge"/>
    <property type="evidence" value="ECO:0000250"/>
    <property type="project" value="UniProtKB"/>
</dbReference>
<dbReference type="GO" id="GO:0005730">
    <property type="term" value="C:nucleolus"/>
    <property type="evidence" value="ECO:0000314"/>
    <property type="project" value="HPA"/>
</dbReference>
<dbReference type="GO" id="GO:0005654">
    <property type="term" value="C:nucleoplasm"/>
    <property type="evidence" value="ECO:0000314"/>
    <property type="project" value="HPA"/>
</dbReference>
<dbReference type="GO" id="GO:0005634">
    <property type="term" value="C:nucleus"/>
    <property type="evidence" value="ECO:0000314"/>
    <property type="project" value="UniProtKB"/>
</dbReference>
<dbReference type="GO" id="GO:0005886">
    <property type="term" value="C:plasma membrane"/>
    <property type="evidence" value="ECO:0000314"/>
    <property type="project" value="HPA"/>
</dbReference>
<dbReference type="GO" id="GO:0005667">
    <property type="term" value="C:transcription regulator complex"/>
    <property type="evidence" value="ECO:0000318"/>
    <property type="project" value="GO_Central"/>
</dbReference>
<dbReference type="GO" id="GO:0019899">
    <property type="term" value="F:enzyme binding"/>
    <property type="evidence" value="ECO:0007669"/>
    <property type="project" value="Ensembl"/>
</dbReference>
<dbReference type="GO" id="GO:0030274">
    <property type="term" value="F:LIM domain binding"/>
    <property type="evidence" value="ECO:0000250"/>
    <property type="project" value="UniProtKB"/>
</dbReference>
<dbReference type="GO" id="GO:0003712">
    <property type="term" value="F:transcription coregulator activity"/>
    <property type="evidence" value="ECO:0000318"/>
    <property type="project" value="GO_Central"/>
</dbReference>
<dbReference type="GO" id="GO:0010669">
    <property type="term" value="P:epithelial structure maintenance"/>
    <property type="evidence" value="ECO:0007669"/>
    <property type="project" value="Ensembl"/>
</dbReference>
<dbReference type="GO" id="GO:0001942">
    <property type="term" value="P:hair follicle development"/>
    <property type="evidence" value="ECO:0007669"/>
    <property type="project" value="Ensembl"/>
</dbReference>
<dbReference type="GO" id="GO:0000122">
    <property type="term" value="P:negative regulation of transcription by RNA polymerase II"/>
    <property type="evidence" value="ECO:0000318"/>
    <property type="project" value="GO_Central"/>
</dbReference>
<dbReference type="GO" id="GO:0007399">
    <property type="term" value="P:nervous system development"/>
    <property type="evidence" value="ECO:0000318"/>
    <property type="project" value="GO_Central"/>
</dbReference>
<dbReference type="GO" id="GO:0044089">
    <property type="term" value="P:positive regulation of cellular component biogenesis"/>
    <property type="evidence" value="ECO:0007669"/>
    <property type="project" value="Ensembl"/>
</dbReference>
<dbReference type="GO" id="GO:0045944">
    <property type="term" value="P:positive regulation of transcription by RNA polymerase II"/>
    <property type="evidence" value="ECO:0000318"/>
    <property type="project" value="GO_Central"/>
</dbReference>
<dbReference type="GO" id="GO:0030334">
    <property type="term" value="P:regulation of cell migration"/>
    <property type="evidence" value="ECO:0000250"/>
    <property type="project" value="UniProtKB"/>
</dbReference>
<dbReference type="GO" id="GO:0043549">
    <property type="term" value="P:regulation of kinase activity"/>
    <property type="evidence" value="ECO:0000250"/>
    <property type="project" value="UniProtKB"/>
</dbReference>
<dbReference type="GO" id="GO:0035019">
    <property type="term" value="P:somatic stem cell population maintenance"/>
    <property type="evidence" value="ECO:0007669"/>
    <property type="project" value="Ensembl"/>
</dbReference>
<dbReference type="FunFam" id="2.10.110.10:FF:000063">
    <property type="entry name" value="LIM domain-binding protein 2 isoform X2"/>
    <property type="match status" value="1"/>
</dbReference>
<dbReference type="Gene3D" id="2.10.110.10">
    <property type="entry name" value="Cysteine Rich Protein"/>
    <property type="match status" value="1"/>
</dbReference>
<dbReference type="InterPro" id="IPR041363">
    <property type="entry name" value="LID"/>
</dbReference>
<dbReference type="InterPro" id="IPR029005">
    <property type="entry name" value="LIM-bd/SEUSS"/>
</dbReference>
<dbReference type="PANTHER" id="PTHR10378">
    <property type="entry name" value="LIM DOMAIN-BINDING PROTEIN"/>
    <property type="match status" value="1"/>
</dbReference>
<dbReference type="Pfam" id="PF17916">
    <property type="entry name" value="LID"/>
    <property type="match status" value="1"/>
</dbReference>
<dbReference type="Pfam" id="PF01803">
    <property type="entry name" value="LIM_bind"/>
    <property type="match status" value="1"/>
</dbReference>
<dbReference type="PROSITE" id="PS51957">
    <property type="entry name" value="LID"/>
    <property type="match status" value="1"/>
</dbReference>
<accession>O43679</accession>
<accession>O60619</accession>
<accession>O75480</accession>
<sequence length="373" mass="42793">MSSTPHDPFYSSPFGPFYRRHTPYMVQPEYRIYEMNKRLQSRTEDSDNLWWDAFATEFFEDDATLTLSFCLEDGPKRYTIGRTLIPRYFSTVFEGGVTDLYYILKHSKESYHNSSITVDCDQCTMVTQHGKPMFTKVCTEGRLILEFTFDDLMRIKTWHFTIRQYRELVPRSILAMHAQDPQVLDQLSKNITRMGLTNFTLNYLRLCVILEPMQELMSRHKTYNLSPRDCLKTCLFQKWQRMVAPPAEPTRQPTTKRRKRKNSTSSTSNSSAGNNANSTGSKKKTTAANLSLSSQVPDVMVVGEPTLMGGEFGDEDERLITRLENTQYDAANGMDDEEDFNNSPALGNNSPWNSKPPATQETKSENPPPQASQ</sequence>
<protein>
    <recommendedName>
        <fullName>LIM domain-binding protein 2</fullName>
        <shortName>LDB-2</shortName>
    </recommendedName>
    <alternativeName>
        <fullName>Carboxyl-terminal LIM domain-binding protein 1</fullName>
        <shortName>CLIM-1</shortName>
    </alternativeName>
    <alternativeName>
        <fullName>LIM domain-binding factor CLIM1</fullName>
    </alternativeName>
</protein>
<name>LDB2_HUMAN</name>
<comment type="function">
    <text evidence="1">Transcription cofactor. Binds to the LIM domain of a wide variety of LIM domain-containing transcription factors.</text>
</comment>
<comment type="subunit">
    <text evidence="1">Interacts with LHX9. Interacts with SLK; leading to negatively regulate SLK kinase activity. Interacts with LMO4.</text>
</comment>
<comment type="interaction">
    <interactant intactId="EBI-2865580">
        <id>O43679</id>
    </interactant>
    <interactant intactId="EBI-725606">
        <id>Q9NWQ9</id>
        <label>C14orf119</label>
    </interactant>
    <organismsDiffer>false</organismsDiffer>
    <experiments>3</experiments>
</comment>
<comment type="interaction">
    <interactant intactId="EBI-2865580">
        <id>O43679</id>
    </interactant>
    <interactant intactId="EBI-712959">
        <id>O15182</id>
        <label>CETN3</label>
    </interactant>
    <organismsDiffer>false</organismsDiffer>
    <experiments>3</experiments>
</comment>
<comment type="interaction">
    <interactant intactId="EBI-2865580">
        <id>O43679</id>
    </interactant>
    <interactant intactId="EBI-742953">
        <id>Q9BY27</id>
        <label>DGCR6L</label>
    </interactant>
    <organismsDiffer>false</organismsDiffer>
    <experiments>3</experiments>
</comment>
<comment type="interaction">
    <interactant intactId="EBI-2865580">
        <id>O43679</id>
    </interactant>
    <interactant intactId="EBI-1175354">
        <id>Q9H6Z9</id>
        <label>EGLN3</label>
    </interactant>
    <organismsDiffer>false</organismsDiffer>
    <experiments>3</experiments>
</comment>
<comment type="interaction">
    <interactant intactId="EBI-2865580">
        <id>O43679</id>
    </interactant>
    <interactant intactId="EBI-6255981">
        <id>Q7L775</id>
        <label>EPM2AIP1</label>
    </interactant>
    <organismsDiffer>false</organismsDiffer>
    <experiments>3</experiments>
</comment>
<comment type="interaction">
    <interactant intactId="EBI-2865580">
        <id>O43679</id>
    </interactant>
    <interactant intactId="EBI-2813180">
        <id>Q86VI1</id>
        <label>EXOC3L1</label>
    </interactant>
    <organismsDiffer>false</organismsDiffer>
    <experiments>3</experiments>
</comment>
<comment type="interaction">
    <interactant intactId="EBI-2865580">
        <id>O43679</id>
    </interactant>
    <interactant intactId="EBI-10299852">
        <id>Q9BVM4</id>
        <label>GGACT</label>
    </interactant>
    <organismsDiffer>false</organismsDiffer>
    <experiments>3</experiments>
</comment>
<comment type="interaction">
    <interactant intactId="EBI-2865580">
        <id>O43679</id>
    </interactant>
    <interactant intactId="EBI-12094670">
        <id>Q8WUI4-6</id>
        <label>HDAC7</label>
    </interactant>
    <organismsDiffer>false</organismsDiffer>
    <experiments>3</experiments>
</comment>
<comment type="interaction">
    <interactant intactId="EBI-2865580">
        <id>O43679</id>
    </interactant>
    <interactant intactId="EBI-8474075">
        <id>Q68G74</id>
        <label>LHX8</label>
    </interactant>
    <organismsDiffer>false</organismsDiffer>
    <experiments>5</experiments>
</comment>
<comment type="interaction">
    <interactant intactId="EBI-2865580">
        <id>O43679</id>
    </interactant>
    <interactant intactId="EBI-8639312">
        <id>P25800</id>
        <label>LMO1</label>
    </interactant>
    <organismsDiffer>false</organismsDiffer>
    <experiments>3</experiments>
</comment>
<comment type="interaction">
    <interactant intactId="EBI-2865580">
        <id>O43679</id>
    </interactant>
    <interactant intactId="EBI-11959475">
        <id>P25791-3</id>
        <label>LMO2</label>
    </interactant>
    <organismsDiffer>false</organismsDiffer>
    <experiments>5</experiments>
</comment>
<comment type="interaction">
    <interactant intactId="EBI-2865580">
        <id>O43679</id>
    </interactant>
    <interactant intactId="EBI-11742507">
        <id>Q8TAP4-4</id>
        <label>LMO3</label>
    </interactant>
    <organismsDiffer>false</organismsDiffer>
    <experiments>5</experiments>
</comment>
<comment type="interaction">
    <interactant intactId="EBI-2865580">
        <id>O43679</id>
    </interactant>
    <interactant intactId="EBI-2798728">
        <id>P61968</id>
        <label>LMO4</label>
    </interactant>
    <organismsDiffer>false</organismsDiffer>
    <experiments>6</experiments>
</comment>
<comment type="interaction">
    <interactant intactId="EBI-2865580">
        <id>O43679</id>
    </interactant>
    <interactant intactId="EBI-739832">
        <id>Q8TBB1</id>
        <label>LNX1</label>
    </interactant>
    <organismsDiffer>false</organismsDiffer>
    <experiments>3</experiments>
</comment>
<comment type="interaction">
    <interactant intactId="EBI-2865580">
        <id>O43679</id>
    </interactant>
    <interactant intactId="EBI-718622">
        <id>Q969H8</id>
        <label>MYDGF</label>
    </interactant>
    <organismsDiffer>false</organismsDiffer>
    <experiments>3</experiments>
</comment>
<comment type="interaction">
    <interactant intactId="EBI-2865580">
        <id>O43679</id>
    </interactant>
    <interactant intactId="EBI-741158">
        <id>Q96HA8</id>
        <label>NTAQ1</label>
    </interactant>
    <organismsDiffer>false</organismsDiffer>
    <experiments>3</experiments>
</comment>
<comment type="interaction">
    <interactant intactId="EBI-2865580">
        <id>O43679</id>
    </interactant>
    <interactant intactId="EBI-372273">
        <id>P20618</id>
        <label>PSMB1</label>
    </interactant>
    <organismsDiffer>false</organismsDiffer>
    <experiments>3</experiments>
</comment>
<comment type="interaction">
    <interactant intactId="EBI-2865580">
        <id>O43679</id>
    </interactant>
    <interactant intactId="EBI-727004">
        <id>O00560</id>
        <label>SDCBP</label>
    </interactant>
    <organismsDiffer>false</organismsDiffer>
    <experiments>3</experiments>
</comment>
<comment type="interaction">
    <interactant intactId="EBI-2865580">
        <id>O43679</id>
    </interactant>
    <interactant intactId="EBI-358489">
        <id>Q96GM5</id>
        <label>SMARCD1</label>
    </interactant>
    <organismsDiffer>false</organismsDiffer>
    <experiments>3</experiments>
</comment>
<comment type="interaction">
    <interactant intactId="EBI-2865580">
        <id>O43679</id>
    </interactant>
    <interactant intactId="EBI-2902395">
        <id>Q9BWW4</id>
        <label>SSBP3</label>
    </interactant>
    <organismsDiffer>false</organismsDiffer>
    <experiments>4</experiments>
</comment>
<comment type="interaction">
    <interactant intactId="EBI-2865580">
        <id>O43679</id>
    </interactant>
    <interactant intactId="EBI-21353855">
        <id>Q99598</id>
        <label>TSNAX</label>
    </interactant>
    <organismsDiffer>false</organismsDiffer>
    <experiments>4</experiments>
</comment>
<comment type="interaction">
    <interactant intactId="EBI-2865580">
        <id>O43679</id>
    </interactant>
    <interactant intactId="EBI-948354">
        <id>Q6DKK2</id>
        <label>TTC19</label>
    </interactant>
    <organismsDiffer>false</organismsDiffer>
    <experiments>3</experiments>
</comment>
<comment type="subcellular location">
    <subcellularLocation>
        <location evidence="4">Nucleus</location>
    </subcellularLocation>
</comment>
<comment type="alternative products">
    <event type="alternative splicing"/>
    <isoform>
        <id>O43679-1</id>
        <name>1</name>
        <name>a</name>
        <name>CLIM1a</name>
        <sequence type="displayed"/>
    </isoform>
    <isoform>
        <id>O43679-2</id>
        <name>2</name>
        <name>b</name>
        <name>CLIM1b</name>
        <sequence type="described" ref="VSP_027826 VSP_027827"/>
    </isoform>
    <isoform>
        <id>O43679-3</id>
        <name>3</name>
        <sequence type="described" ref="VSP_027825 VSP_027828"/>
    </isoform>
</comment>
<comment type="PTM">
    <text evidence="1">Ubiquitinated by RLIM/RNF12, leading to its degradation by the proteasome.</text>
</comment>
<comment type="miscellaneous">
    <molecule>Isoform 2</molecule>
    <text evidence="7">Lacks LIM-binding domain.</text>
</comment>
<comment type="similarity">
    <text evidence="7">Belongs to the LDB family.</text>
</comment>
<organism>
    <name type="scientific">Homo sapiens</name>
    <name type="common">Human</name>
    <dbReference type="NCBI Taxonomy" id="9606"/>
    <lineage>
        <taxon>Eukaryota</taxon>
        <taxon>Metazoa</taxon>
        <taxon>Chordata</taxon>
        <taxon>Craniata</taxon>
        <taxon>Vertebrata</taxon>
        <taxon>Euteleostomi</taxon>
        <taxon>Mammalia</taxon>
        <taxon>Eutheria</taxon>
        <taxon>Euarchontoglires</taxon>
        <taxon>Primates</taxon>
        <taxon>Haplorrhini</taxon>
        <taxon>Catarrhini</taxon>
        <taxon>Hominidae</taxon>
        <taxon>Homo</taxon>
    </lineage>
</organism>
<keyword id="KW-0025">Alternative splicing</keyword>
<keyword id="KW-0539">Nucleus</keyword>
<keyword id="KW-1267">Proteomics identification</keyword>
<keyword id="KW-1185">Reference proteome</keyword>
<keyword id="KW-0832">Ubl conjugation</keyword>